<proteinExistence type="evidence at protein level"/>
<comment type="function">
    <text evidence="1">Probable metal transporter.</text>
</comment>
<comment type="interaction">
    <interactant intactId="EBI-741032">
        <id>Q8NE01</id>
    </interactant>
    <interactant intactId="EBI-77797">
        <id>P35609</id>
        <label>ACTN2</label>
    </interactant>
    <organismsDiffer>false</organismsDiffer>
    <experiments>3</experiments>
</comment>
<comment type="interaction">
    <interactant intactId="EBI-741032">
        <id>Q8NE01</id>
    </interactant>
    <interactant intactId="EBI-712648">
        <id>O95994</id>
        <label>AGR2</label>
    </interactant>
    <organismsDiffer>false</organismsDiffer>
    <experiments>3</experiments>
</comment>
<comment type="interaction">
    <interactant intactId="EBI-741032">
        <id>Q8NE01</id>
    </interactant>
    <interactant intactId="EBI-3925742">
        <id>Q8TD06</id>
        <label>AGR3</label>
    </interactant>
    <organismsDiffer>false</organismsDiffer>
    <experiments>3</experiments>
</comment>
<comment type="interaction">
    <interactant intactId="EBI-741032">
        <id>Q8NE01</id>
    </interactant>
    <interactant intactId="EBI-357530">
        <id>Q9ULX6</id>
        <label>AKAP8L</label>
    </interactant>
    <organismsDiffer>false</organismsDiffer>
    <experiments>3</experiments>
</comment>
<comment type="interaction">
    <interactant intactId="EBI-741032">
        <id>Q8NE01</id>
    </interactant>
    <interactant intactId="EBI-739580">
        <id>Q13137</id>
        <label>CALCOCO2</label>
    </interactant>
    <organismsDiffer>false</organismsDiffer>
    <experiments>3</experiments>
</comment>
<comment type="interaction">
    <interactant intactId="EBI-741032">
        <id>Q8NE01</id>
    </interactant>
    <interactant intactId="EBI-3866279">
        <id>Q9BWT7</id>
        <label>CARD10</label>
    </interactant>
    <organismsDiffer>false</organismsDiffer>
    <experiments>3</experiments>
</comment>
<comment type="interaction">
    <interactant intactId="EBI-741032">
        <id>Q8NE01</id>
    </interactant>
    <interactant intactId="EBI-741724">
        <id>Q8NA61</id>
        <label>CBY2</label>
    </interactant>
    <organismsDiffer>false</organismsDiffer>
    <experiments>3</experiments>
</comment>
<comment type="interaction">
    <interactant intactId="EBI-741032">
        <id>Q8NE01</id>
    </interactant>
    <interactant intactId="EBI-11524851">
        <id>Q8NA61-2</id>
        <label>CBY2</label>
    </interactant>
    <organismsDiffer>false</organismsDiffer>
    <experiments>3</experiments>
</comment>
<comment type="interaction">
    <interactant intactId="EBI-741032">
        <id>Q8NE01</id>
    </interactant>
    <interactant intactId="EBI-748961">
        <id>O95273</id>
        <label>CCNDBP1</label>
    </interactant>
    <organismsDiffer>false</organismsDiffer>
    <experiments>3</experiments>
</comment>
<comment type="interaction">
    <interactant intactId="EBI-741032">
        <id>Q8NE01</id>
    </interactant>
    <interactant intactId="EBI-3866319">
        <id>Q9Y2V7</id>
        <label>COG6</label>
    </interactant>
    <organismsDiffer>false</organismsDiffer>
    <experiments>3</experiments>
</comment>
<comment type="interaction">
    <interactant intactId="EBI-741032">
        <id>Q8NE01</id>
    </interactant>
    <interactant intactId="EBI-3867333">
        <id>A8MQ03</id>
        <label>CYSRT1</label>
    </interactant>
    <organismsDiffer>false</organismsDiffer>
    <experiments>3</experiments>
</comment>
<comment type="interaction">
    <interactant intactId="EBI-741032">
        <id>Q8NE01</id>
    </interactant>
    <interactant intactId="EBI-743414">
        <id>O95967</id>
        <label>EFEMP2</label>
    </interactant>
    <organismsDiffer>false</organismsDiffer>
    <experiments>3</experiments>
</comment>
<comment type="interaction">
    <interactant intactId="EBI-741032">
        <id>Q8NE01</id>
    </interactant>
    <interactant intactId="EBI-371922">
        <id>Q96B26</id>
        <label>EXOSC8</label>
    </interactant>
    <organismsDiffer>false</organismsDiffer>
    <experiments>3</experiments>
</comment>
<comment type="interaction">
    <interactant intactId="EBI-741032">
        <id>Q8NE01</id>
    </interactant>
    <interactant intactId="EBI-741101">
        <id>Q13643</id>
        <label>FHL3</label>
    </interactant>
    <organismsDiffer>false</organismsDiffer>
    <experiments>9</experiments>
</comment>
<comment type="interaction">
    <interactant intactId="EBI-741032">
        <id>Q8NE01</id>
    </interactant>
    <interactant intactId="EBI-750641">
        <id>Q5TD97</id>
        <label>FHL5</label>
    </interactant>
    <organismsDiffer>false</organismsDiffer>
    <experiments>3</experiments>
</comment>
<comment type="interaction">
    <interactant intactId="EBI-741032">
        <id>Q8NE01</id>
    </interactant>
    <interactant intactId="EBI-5916454">
        <id>A6NEM1</id>
        <label>GOLGA6L9</label>
    </interactant>
    <organismsDiffer>false</organismsDiffer>
    <experiments>3</experiments>
</comment>
<comment type="interaction">
    <interactant intactId="EBI-741032">
        <id>Q8NE01</id>
    </interactant>
    <interactant intactId="EBI-7060731">
        <id>P61978-2</id>
        <label>HNRNPK</label>
    </interactant>
    <organismsDiffer>false</organismsDiffer>
    <experiments>3</experiments>
</comment>
<comment type="interaction">
    <interactant intactId="EBI-741032">
        <id>Q8NE01</id>
    </interactant>
    <interactant intactId="EBI-740785">
        <id>P49639</id>
        <label>HOXA1</label>
    </interactant>
    <organismsDiffer>false</organismsDiffer>
    <experiments>5</experiments>
</comment>
<comment type="interaction">
    <interactant intactId="EBI-741032">
        <id>Q8NE01</id>
    </interactant>
    <interactant intactId="EBI-7116203">
        <id>O75031</id>
        <label>HSF2BP</label>
    </interactant>
    <organismsDiffer>false</organismsDiffer>
    <experiments>3</experiments>
</comment>
<comment type="interaction">
    <interactant intactId="EBI-741032">
        <id>Q8NE01</id>
    </interactant>
    <interactant intactId="EBI-742808">
        <id>Q5VWX1</id>
        <label>KHDRBS2</label>
    </interactant>
    <organismsDiffer>false</organismsDiffer>
    <experiments>3</experiments>
</comment>
<comment type="interaction">
    <interactant intactId="EBI-741032">
        <id>Q8NE01</id>
    </interactant>
    <interactant intactId="EBI-722504">
        <id>O75525</id>
        <label>KHDRBS3</label>
    </interactant>
    <organismsDiffer>false</organismsDiffer>
    <experiments>3</experiments>
</comment>
<comment type="interaction">
    <interactant intactId="EBI-741032">
        <id>Q8NE01</id>
    </interactant>
    <interactant intactId="EBI-10981970">
        <id>Q5T749</id>
        <label>KPRP</label>
    </interactant>
    <organismsDiffer>false</organismsDiffer>
    <experiments>3</experiments>
</comment>
<comment type="interaction">
    <interactant intactId="EBI-741032">
        <id>Q8NE01</id>
    </interactant>
    <interactant intactId="EBI-948001">
        <id>Q15323</id>
        <label>KRT31</label>
    </interactant>
    <organismsDiffer>false</organismsDiffer>
    <experiments>3</experiments>
</comment>
<comment type="interaction">
    <interactant intactId="EBI-741032">
        <id>Q8NE01</id>
    </interactant>
    <interactant intactId="EBI-1049638">
        <id>Q14525</id>
        <label>KRT33B</label>
    </interactant>
    <organismsDiffer>false</organismsDiffer>
    <experiments>3</experiments>
</comment>
<comment type="interaction">
    <interactant intactId="EBI-741032">
        <id>Q8NE01</id>
    </interactant>
    <interactant intactId="EBI-10171697">
        <id>Q6A162</id>
        <label>KRT40</label>
    </interactant>
    <organismsDiffer>false</organismsDiffer>
    <experiments>3</experiments>
</comment>
<comment type="interaction">
    <interactant intactId="EBI-741032">
        <id>Q8NE01</id>
    </interactant>
    <interactant intactId="EBI-11959885">
        <id>Q07627</id>
        <label>KRTAP1-1</label>
    </interactant>
    <organismsDiffer>false</organismsDiffer>
    <experiments>3</experiments>
</comment>
<comment type="interaction">
    <interactant intactId="EBI-741032">
        <id>Q8NE01</id>
    </interactant>
    <interactant intactId="EBI-11749135">
        <id>Q8IUG1</id>
        <label>KRTAP1-3</label>
    </interactant>
    <organismsDiffer>false</organismsDiffer>
    <experiments>3</experiments>
</comment>
<comment type="interaction">
    <interactant intactId="EBI-741032">
        <id>Q8NE01</id>
    </interactant>
    <interactant intactId="EBI-10172150">
        <id>P60370</id>
        <label>KRTAP10-5</label>
    </interactant>
    <organismsDiffer>false</organismsDiffer>
    <experiments>3</experiments>
</comment>
<comment type="interaction">
    <interactant intactId="EBI-741032">
        <id>Q8NE01</id>
    </interactant>
    <interactant intactId="EBI-10172290">
        <id>P60409</id>
        <label>KRTAP10-7</label>
    </interactant>
    <organismsDiffer>false</organismsDiffer>
    <experiments>5</experiments>
</comment>
<comment type="interaction">
    <interactant intactId="EBI-741032">
        <id>Q8NE01</id>
    </interactant>
    <interactant intactId="EBI-10171774">
        <id>P60410</id>
        <label>KRTAP10-8</label>
    </interactant>
    <organismsDiffer>false</organismsDiffer>
    <experiments>6</experiments>
</comment>
<comment type="interaction">
    <interactant intactId="EBI-741032">
        <id>Q8NE01</id>
    </interactant>
    <interactant intactId="EBI-10172052">
        <id>P60411</id>
        <label>KRTAP10-9</label>
    </interactant>
    <organismsDiffer>false</organismsDiffer>
    <experiments>6</experiments>
</comment>
<comment type="interaction">
    <interactant intactId="EBI-741032">
        <id>Q8NE01</id>
    </interactant>
    <interactant intactId="EBI-10176379">
        <id>P59991</id>
        <label>KRTAP12-2</label>
    </interactant>
    <organismsDiffer>false</organismsDiffer>
    <experiments>3</experiments>
</comment>
<comment type="interaction">
    <interactant intactId="EBI-741032">
        <id>Q8NE01</id>
    </interactant>
    <interactant intactId="EBI-11953334">
        <id>P60328</id>
        <label>KRTAP12-3</label>
    </interactant>
    <organismsDiffer>false</organismsDiffer>
    <experiments>3</experiments>
</comment>
<comment type="interaction">
    <interactant intactId="EBI-741032">
        <id>Q8NE01</id>
    </interactant>
    <interactant intactId="EBI-11988175">
        <id>Q9BYP8</id>
        <label>KRTAP17-1</label>
    </interactant>
    <organismsDiffer>false</organismsDiffer>
    <experiments>5</experiments>
</comment>
<comment type="interaction">
    <interactant intactId="EBI-741032">
        <id>Q8NE01</id>
    </interactant>
    <interactant intactId="EBI-10196781">
        <id>P0C7H8</id>
        <label>KRTAP2-3</label>
    </interactant>
    <organismsDiffer>false</organismsDiffer>
    <experiments>3</experiments>
</comment>
<comment type="interaction">
    <interactant intactId="EBI-741032">
        <id>Q8NE01</id>
    </interactant>
    <interactant intactId="EBI-9996449">
        <id>Q9BYR8</id>
        <label>KRTAP3-1</label>
    </interactant>
    <organismsDiffer>false</organismsDiffer>
    <experiments>3</experiments>
</comment>
<comment type="interaction">
    <interactant intactId="EBI-741032">
        <id>Q8NE01</id>
    </interactant>
    <interactant intactId="EBI-751260">
        <id>Q9BYR7</id>
        <label>KRTAP3-2</label>
    </interactant>
    <organismsDiffer>false</organismsDiffer>
    <experiments>3</experiments>
</comment>
<comment type="interaction">
    <interactant intactId="EBI-741032">
        <id>Q8NE01</id>
    </interactant>
    <interactant intactId="EBI-3958099">
        <id>P26371</id>
        <label>KRTAP5-9</label>
    </interactant>
    <organismsDiffer>false</organismsDiffer>
    <experiments>6</experiments>
</comment>
<comment type="interaction">
    <interactant intactId="EBI-741032">
        <id>Q8NE01</id>
    </interactant>
    <interactant intactId="EBI-22311199">
        <id>Q3LI67</id>
        <label>KRTAP6-3</label>
    </interactant>
    <organismsDiffer>false</organismsDiffer>
    <experiments>3</experiments>
</comment>
<comment type="interaction">
    <interactant intactId="EBI-741032">
        <id>Q8NE01</id>
    </interactant>
    <interactant intactId="EBI-1044640">
        <id>Q9BYQ4</id>
        <label>KRTAP9-2</label>
    </interactant>
    <organismsDiffer>false</organismsDiffer>
    <experiments>3</experiments>
</comment>
<comment type="interaction">
    <interactant intactId="EBI-741032">
        <id>Q8NE01</id>
    </interactant>
    <interactant intactId="EBI-1043191">
        <id>Q9BYQ3</id>
        <label>KRTAP9-3</label>
    </interactant>
    <organismsDiffer>false</organismsDiffer>
    <experiments>3</experiments>
</comment>
<comment type="interaction">
    <interactant intactId="EBI-741032">
        <id>Q8NE01</id>
    </interactant>
    <interactant intactId="EBI-11958364">
        <id>Q9BYQ0</id>
        <label>KRTAP9-8</label>
    </interactant>
    <organismsDiffer>false</organismsDiffer>
    <experiments>3</experiments>
</comment>
<comment type="interaction">
    <interactant intactId="EBI-741032">
        <id>Q8NE01</id>
    </interactant>
    <interactant intactId="EBI-741037">
        <id>Q9BRK4</id>
        <label>LZTS2</label>
    </interactant>
    <organismsDiffer>false</organismsDiffer>
    <experiments>3</experiments>
</comment>
<comment type="interaction">
    <interactant intactId="EBI-741032">
        <id>Q8NE01</id>
    </interactant>
    <interactant intactId="EBI-724076">
        <id>Q99750</id>
        <label>MDFI</label>
    </interactant>
    <organismsDiffer>false</organismsDiffer>
    <experiments>6</experiments>
</comment>
<comment type="interaction">
    <interactant intactId="EBI-741032">
        <id>Q8NE01</id>
    </interactant>
    <interactant intactId="EBI-10172526">
        <id>Q9UJV3-2</id>
        <label>MID2</label>
    </interactant>
    <organismsDiffer>false</organismsDiffer>
    <experiments>3</experiments>
</comment>
<comment type="interaction">
    <interactant intactId="EBI-741032">
        <id>Q8NE01</id>
    </interactant>
    <interactant intactId="EBI-11522433">
        <id>Q5JR59-3</id>
        <label>MTUS2</label>
    </interactant>
    <organismsDiffer>false</organismsDiffer>
    <experiments>3</experiments>
</comment>
<comment type="interaction">
    <interactant intactId="EBI-741032">
        <id>Q8NE01</id>
    </interactant>
    <interactant intactId="EBI-22310682">
        <id>P0DPK4</id>
        <label>NOTCH2NLC</label>
    </interactant>
    <organismsDiffer>false</organismsDiffer>
    <experiments>3</experiments>
</comment>
<comment type="interaction">
    <interactant intactId="EBI-741032">
        <id>Q8NE01</id>
    </interactant>
    <interactant intactId="EBI-395883">
        <id>P07237</id>
        <label>P4HB</label>
    </interactant>
    <organismsDiffer>false</organismsDiffer>
    <experiments>3</experiments>
</comment>
<comment type="interaction">
    <interactant intactId="EBI-741032">
        <id>Q8NE01</id>
    </interactant>
    <interactant intactId="EBI-11339910">
        <id>Q8IYS1</id>
        <label>PM20D2</label>
    </interactant>
    <organismsDiffer>false</organismsDiffer>
    <experiments>3</experiments>
</comment>
<comment type="interaction">
    <interactant intactId="EBI-741032">
        <id>Q8NE01</id>
    </interactant>
    <interactant intactId="EBI-302345">
        <id>Q8ND90</id>
        <label>PNMA1</label>
    </interactant>
    <organismsDiffer>false</organismsDiffer>
    <experiments>3</experiments>
</comment>
<comment type="interaction">
    <interactant intactId="EBI-741032">
        <id>Q8NE01</id>
    </interactant>
    <interactant intactId="EBI-302355">
        <id>Q9UL42</id>
        <label>PNMA2</label>
    </interactant>
    <organismsDiffer>false</organismsDiffer>
    <experiments>3</experiments>
</comment>
<comment type="interaction">
    <interactant intactId="EBI-741032">
        <id>Q8NE01</id>
    </interactant>
    <interactant intactId="EBI-11278955">
        <id>Q9UL41</id>
        <label>PNMA3</label>
    </interactant>
    <organismsDiffer>false</organismsDiffer>
    <experiments>3</experiments>
</comment>
<comment type="interaction">
    <interactant intactId="EBI-741032">
        <id>Q8NE01</id>
    </interactant>
    <interactant intactId="EBI-743526">
        <id>P38159</id>
        <label>RBMX</label>
    </interactant>
    <organismsDiffer>false</organismsDiffer>
    <experiments>3</experiments>
</comment>
<comment type="interaction">
    <interactant intactId="EBI-741032">
        <id>Q8NE01</id>
    </interactant>
    <interactant intactId="EBI-8642021">
        <id>Q15415</id>
        <label>RBMY1J</label>
    </interactant>
    <organismsDiffer>false</organismsDiffer>
    <experiments>3</experiments>
</comment>
<comment type="interaction">
    <interactant intactId="EBI-741032">
        <id>Q8NE01</id>
    </interactant>
    <interactant intactId="EBI-740343">
        <id>Q93062-3</id>
        <label>RBPMS</label>
    </interactant>
    <organismsDiffer>false</organismsDiffer>
    <experiments>3</experiments>
</comment>
<comment type="interaction">
    <interactant intactId="EBI-741032">
        <id>Q8NE01</id>
    </interactant>
    <interactant intactId="EBI-372557">
        <id>P84103</id>
        <label>SRSF3</label>
    </interactant>
    <organismsDiffer>false</organismsDiffer>
    <experiments>3</experiments>
</comment>
<comment type="interaction">
    <interactant intactId="EBI-741032">
        <id>Q8NE01</id>
    </interactant>
    <interactant intactId="EBI-2562368">
        <id>P22735</id>
        <label>TGM1</label>
    </interactant>
    <organismsDiffer>false</organismsDiffer>
    <experiments>3</experiments>
</comment>
<comment type="interaction">
    <interactant intactId="EBI-741032">
        <id>Q8NE01</id>
    </interactant>
    <interactant intactId="EBI-949753">
        <id>Q63HR2</id>
        <label>TNS2</label>
    </interactant>
    <organismsDiffer>false</organismsDiffer>
    <experiments>3</experiments>
</comment>
<comment type="interaction">
    <interactant intactId="EBI-741032">
        <id>Q8NE01</id>
    </interactant>
    <interactant intactId="EBI-719493">
        <id>P14373</id>
        <label>TRIM27</label>
    </interactant>
    <organismsDiffer>false</organismsDiffer>
    <experiments>3</experiments>
</comment>
<comment type="interaction">
    <interactant intactId="EBI-741032">
        <id>Q8NE01</id>
    </interactant>
    <interactant intactId="EBI-947187">
        <id>Q9UHD9</id>
        <label>UBQLN2</label>
    </interactant>
    <organismsDiffer>false</organismsDiffer>
    <experiments>3</experiments>
</comment>
<comment type="interaction">
    <interactant intactId="EBI-741032">
        <id>Q8NE01</id>
    </interactant>
    <interactant intactId="EBI-739895">
        <id>Q8N6Y0</id>
        <label>USHBP1</label>
    </interactant>
    <organismsDiffer>false</organismsDiffer>
    <experiments>3</experiments>
</comment>
<comment type="interaction">
    <interactant intactId="EBI-741032">
        <id>Q8NE01</id>
    </interactant>
    <interactant intactId="EBI-11957238">
        <id>Q2TAL6</id>
        <label>VWC2</label>
    </interactant>
    <organismsDiffer>false</organismsDiffer>
    <experiments>5</experiments>
</comment>
<comment type="interaction">
    <interactant intactId="EBI-741032">
        <id>Q8NE01</id>
    </interactant>
    <interactant intactId="EBI-12040603">
        <id>Q9NZC7-5</id>
        <label>WWOX</label>
    </interactant>
    <organismsDiffer>false</organismsDiffer>
    <experiments>3</experiments>
</comment>
<comment type="interaction">
    <interactant intactId="EBI-741032">
        <id>Q8NE01</id>
    </interactant>
    <interactant intactId="EBI-373456">
        <id>Q9Y3S2</id>
        <label>ZNF330</label>
    </interactant>
    <organismsDiffer>false</organismsDiffer>
    <experiments>3</experiments>
</comment>
<comment type="interaction">
    <interactant intactId="EBI-741032">
        <id>Q8NE01</id>
    </interactant>
    <interactant intactId="EBI-527853">
        <id>Q9UGI0</id>
        <label>ZRANB1</label>
    </interactant>
    <organismsDiffer>false</organismsDiffer>
    <experiments>3</experiments>
</comment>
<comment type="interaction">
    <interactant intactId="EBI-10269984">
        <id>Q8NE01-3</id>
    </interactant>
    <interactant intactId="EBI-741101">
        <id>Q13643</id>
        <label>FHL3</label>
    </interactant>
    <organismsDiffer>false</organismsDiffer>
    <experiments>3</experiments>
</comment>
<comment type="interaction">
    <interactant intactId="EBI-10269984">
        <id>Q8NE01-3</id>
    </interactant>
    <interactant intactId="EBI-10172052">
        <id>P60411</id>
        <label>KRTAP10-9</label>
    </interactant>
    <organismsDiffer>false</organismsDiffer>
    <experiments>3</experiments>
</comment>
<comment type="interaction">
    <interactant intactId="EBI-10269984">
        <id>Q8NE01-3</id>
    </interactant>
    <interactant intactId="EBI-751260">
        <id>Q9BYR7</id>
        <label>KRTAP3-2</label>
    </interactant>
    <organismsDiffer>false</organismsDiffer>
    <experiments>3</experiments>
</comment>
<comment type="interaction">
    <interactant intactId="EBI-10269984">
        <id>Q8NE01-3</id>
    </interactant>
    <interactant intactId="EBI-741037">
        <id>Q9BRK4</id>
        <label>LZTS2</label>
    </interactant>
    <organismsDiffer>false</organismsDiffer>
    <experiments>3</experiments>
</comment>
<comment type="interaction">
    <interactant intactId="EBI-10269984">
        <id>Q8NE01-3</id>
    </interactant>
    <interactant intactId="EBI-302345">
        <id>Q8ND90</id>
        <label>PNMA1</label>
    </interactant>
    <organismsDiffer>false</organismsDiffer>
    <experiments>3</experiments>
</comment>
<comment type="interaction">
    <interactant intactId="EBI-10269984">
        <id>Q8NE01-3</id>
    </interactant>
    <interactant intactId="EBI-739895">
        <id>Q8N6Y0</id>
        <label>USHBP1</label>
    </interactant>
    <organismsDiffer>false</organismsDiffer>
    <experiments>3</experiments>
</comment>
<comment type="subcellular location">
    <subcellularLocation>
        <location evidence="1">Cell membrane</location>
        <topology evidence="1">Multi-pass membrane protein</topology>
    </subcellularLocation>
</comment>
<comment type="alternative products">
    <event type="alternative splicing"/>
    <isoform>
        <id>Q8NE01-1</id>
        <name>1</name>
        <sequence type="displayed"/>
    </isoform>
    <isoform>
        <id>Q8NE01-2</id>
        <name>2</name>
        <sequence type="described" ref="VSP_027082"/>
    </isoform>
    <isoform>
        <id>Q8NE01-3</id>
        <name>3</name>
        <sequence type="described" ref="VSP_027082 VSP_027083"/>
    </isoform>
</comment>
<comment type="tissue specificity">
    <text evidence="6">Widely expressed. Expressed at higher level in heart and spleen.</text>
</comment>
<comment type="miscellaneous">
    <text>Shares weak sequence similarity with the cyclin family, hence its name. However, it has no cyclin-like function in vivo.</text>
</comment>
<comment type="similarity">
    <text evidence="9">Belongs to the ACDP family.</text>
</comment>
<comment type="sequence caution" evidence="9">
    <conflict type="erroneous initiation">
        <sequence resource="EMBL-CDS" id="AAF86377"/>
    </conflict>
</comment>
<comment type="sequence caution" evidence="9">
    <conflict type="erroneous initiation">
        <sequence resource="EMBL-CDS" id="AAH07199"/>
    </conflict>
</comment>
<comment type="sequence caution" evidence="9">
    <conflict type="frameshift">
        <sequence resource="EMBL-CDS" id="BAA90891"/>
    </conflict>
</comment>
<organism>
    <name type="scientific">Homo sapiens</name>
    <name type="common">Human</name>
    <dbReference type="NCBI Taxonomy" id="9606"/>
    <lineage>
        <taxon>Eukaryota</taxon>
        <taxon>Metazoa</taxon>
        <taxon>Chordata</taxon>
        <taxon>Craniata</taxon>
        <taxon>Vertebrata</taxon>
        <taxon>Euteleostomi</taxon>
        <taxon>Mammalia</taxon>
        <taxon>Eutheria</taxon>
        <taxon>Euarchontoglires</taxon>
        <taxon>Primates</taxon>
        <taxon>Haplorrhini</taxon>
        <taxon>Catarrhini</taxon>
        <taxon>Hominidae</taxon>
        <taxon>Homo</taxon>
    </lineage>
</organism>
<protein>
    <recommendedName>
        <fullName>Metal transporter CNNM3</fullName>
    </recommendedName>
    <alternativeName>
        <fullName>Ancient conserved domain-containing protein 3</fullName>
    </alternativeName>
    <alternativeName>
        <fullName>Cyclin-M3</fullName>
    </alternativeName>
</protein>
<keyword id="KW-0002">3D-structure</keyword>
<keyword id="KW-0025">Alternative splicing</keyword>
<keyword id="KW-0129">CBS domain</keyword>
<keyword id="KW-1003">Cell membrane</keyword>
<keyword id="KW-0325">Glycoprotein</keyword>
<keyword id="KW-0406">Ion transport</keyword>
<keyword id="KW-0472">Membrane</keyword>
<keyword id="KW-0597">Phosphoprotein</keyword>
<keyword id="KW-1267">Proteomics identification</keyword>
<keyword id="KW-1185">Reference proteome</keyword>
<keyword id="KW-0677">Repeat</keyword>
<keyword id="KW-0812">Transmembrane</keyword>
<keyword id="KW-1133">Transmembrane helix</keyword>
<keyword id="KW-0813">Transport</keyword>
<gene>
    <name type="primary">CNNM3</name>
    <name type="synonym">ACDP3</name>
</gene>
<sequence>MAAAVAAAGRLGWLFAALCLGNAAGEAAPGPRVLGFCLEEDGAAGAGWVRGGAARDTPDATFLLRLFGPGFANSSWSWVAPEGAGCREEAASPAGEWRALLRLRLRAEAVRPHSALLAVRVEPGGGAAEEAAPPWALGLGAAGLLALAALARGLQLSALALAPAEVQVLRESGSEAERAAARRLEPARRWAGCALGALLLLASLAQAALAVLLYRAAGQRAVPAVLGSAGLVFLVGEVVPAAVSGRWTLALAPRALGLSRLAVLLTLPVALPVGQLLELAARPGRLRERVLELARGGGDPYSDLSKGVLRCRTVEDVLTPLEDCFMLDASTVLDFGVLASIMQSGHTRIPVYEEERSNIVDMLYLKDLAFVDPEDCTPLSTITRFYNHPLHFVFNDTKLDAVLEEFKRGKSHLAIVQKVNNEGEGDPFYEVLGLVTLEDVIEEIIRSEILDESEDYRDTVVKRKPASLMAPLKRKEEFSLFKVSDDEYKVTISPQLLLATQRFLSREVDVFSPLRISEKVLLHLLKHPSVNQEVRFDESNRLATHHYLYQRSQPVDYFILILQGRVEVEIGKEGLKFENGAFTYYGVSALTVPSSVHQSPVSSLQPIRHDLQPDPGDGTHSSAYCPDYTVRALSDLQLIKVTRLQYLNALLATRAQNLPQSPENTDLQVIPGSQTRLLGEKTTTAAGSSHSRPGVPVEGSPGRNPGV</sequence>
<reference key="1">
    <citation type="journal article" date="2004" name="Nat. Genet.">
        <title>Complete sequencing and characterization of 21,243 full-length human cDNAs.</title>
        <authorList>
            <person name="Ota T."/>
            <person name="Suzuki Y."/>
            <person name="Nishikawa T."/>
            <person name="Otsuki T."/>
            <person name="Sugiyama T."/>
            <person name="Irie R."/>
            <person name="Wakamatsu A."/>
            <person name="Hayashi K."/>
            <person name="Sato H."/>
            <person name="Nagai K."/>
            <person name="Kimura K."/>
            <person name="Makita H."/>
            <person name="Sekine M."/>
            <person name="Obayashi M."/>
            <person name="Nishi T."/>
            <person name="Shibahara T."/>
            <person name="Tanaka T."/>
            <person name="Ishii S."/>
            <person name="Yamamoto J."/>
            <person name="Saito K."/>
            <person name="Kawai Y."/>
            <person name="Isono Y."/>
            <person name="Nakamura Y."/>
            <person name="Nagahari K."/>
            <person name="Murakami K."/>
            <person name="Yasuda T."/>
            <person name="Iwayanagi T."/>
            <person name="Wagatsuma M."/>
            <person name="Shiratori A."/>
            <person name="Sudo H."/>
            <person name="Hosoiri T."/>
            <person name="Kaku Y."/>
            <person name="Kodaira H."/>
            <person name="Kondo H."/>
            <person name="Sugawara M."/>
            <person name="Takahashi M."/>
            <person name="Kanda K."/>
            <person name="Yokoi T."/>
            <person name="Furuya T."/>
            <person name="Kikkawa E."/>
            <person name="Omura Y."/>
            <person name="Abe K."/>
            <person name="Kamihara K."/>
            <person name="Katsuta N."/>
            <person name="Sato K."/>
            <person name="Tanikawa M."/>
            <person name="Yamazaki M."/>
            <person name="Ninomiya K."/>
            <person name="Ishibashi T."/>
            <person name="Yamashita H."/>
            <person name="Murakawa K."/>
            <person name="Fujimori K."/>
            <person name="Tanai H."/>
            <person name="Kimata M."/>
            <person name="Watanabe M."/>
            <person name="Hiraoka S."/>
            <person name="Chiba Y."/>
            <person name="Ishida S."/>
            <person name="Ono Y."/>
            <person name="Takiguchi S."/>
            <person name="Watanabe S."/>
            <person name="Yosida M."/>
            <person name="Hotuta T."/>
            <person name="Kusano J."/>
            <person name="Kanehori K."/>
            <person name="Takahashi-Fujii A."/>
            <person name="Hara H."/>
            <person name="Tanase T.-O."/>
            <person name="Nomura Y."/>
            <person name="Togiya S."/>
            <person name="Komai F."/>
            <person name="Hara R."/>
            <person name="Takeuchi K."/>
            <person name="Arita M."/>
            <person name="Imose N."/>
            <person name="Musashino K."/>
            <person name="Yuuki H."/>
            <person name="Oshima A."/>
            <person name="Sasaki N."/>
            <person name="Aotsuka S."/>
            <person name="Yoshikawa Y."/>
            <person name="Matsunawa H."/>
            <person name="Ichihara T."/>
            <person name="Shiohata N."/>
            <person name="Sano S."/>
            <person name="Moriya S."/>
            <person name="Momiyama H."/>
            <person name="Satoh N."/>
            <person name="Takami S."/>
            <person name="Terashima Y."/>
            <person name="Suzuki O."/>
            <person name="Nakagawa S."/>
            <person name="Senoh A."/>
            <person name="Mizoguchi H."/>
            <person name="Goto Y."/>
            <person name="Shimizu F."/>
            <person name="Wakebe H."/>
            <person name="Hishigaki H."/>
            <person name="Watanabe T."/>
            <person name="Sugiyama A."/>
            <person name="Takemoto M."/>
            <person name="Kawakami B."/>
            <person name="Yamazaki M."/>
            <person name="Watanabe K."/>
            <person name="Kumagai A."/>
            <person name="Itakura S."/>
            <person name="Fukuzumi Y."/>
            <person name="Fujimori Y."/>
            <person name="Komiyama M."/>
            <person name="Tashiro H."/>
            <person name="Tanigami A."/>
            <person name="Fujiwara T."/>
            <person name="Ono T."/>
            <person name="Yamada K."/>
            <person name="Fujii Y."/>
            <person name="Ozaki K."/>
            <person name="Hirao M."/>
            <person name="Ohmori Y."/>
            <person name="Kawabata A."/>
            <person name="Hikiji T."/>
            <person name="Kobatake N."/>
            <person name="Inagaki H."/>
            <person name="Ikema Y."/>
            <person name="Okamoto S."/>
            <person name="Okitani R."/>
            <person name="Kawakami T."/>
            <person name="Noguchi S."/>
            <person name="Itoh T."/>
            <person name="Shigeta K."/>
            <person name="Senba T."/>
            <person name="Matsumura K."/>
            <person name="Nakajima Y."/>
            <person name="Mizuno T."/>
            <person name="Morinaga M."/>
            <person name="Sasaki M."/>
            <person name="Togashi T."/>
            <person name="Oyama M."/>
            <person name="Hata H."/>
            <person name="Watanabe M."/>
            <person name="Komatsu T."/>
            <person name="Mizushima-Sugano J."/>
            <person name="Satoh T."/>
            <person name="Shirai Y."/>
            <person name="Takahashi Y."/>
            <person name="Nakagawa K."/>
            <person name="Okumura K."/>
            <person name="Nagase T."/>
            <person name="Nomura N."/>
            <person name="Kikuchi H."/>
            <person name="Masuho Y."/>
            <person name="Yamashita R."/>
            <person name="Nakai K."/>
            <person name="Yada T."/>
            <person name="Nakamura Y."/>
            <person name="Ohara O."/>
            <person name="Isogai T."/>
            <person name="Sugano S."/>
        </authorList>
    </citation>
    <scope>NUCLEOTIDE SEQUENCE [LARGE SCALE MRNA] (ISOFORM 1)</scope>
    <scope>NUCLEOTIDE SEQUENCE [LARGE SCALE MRNA] OF 313-707 (ISOFORM 2)</scope>
    <source>
        <tissue>Adipose tissue</tissue>
        <tissue>Amygdala</tissue>
    </source>
</reference>
<reference key="2">
    <citation type="journal article" date="2005" name="Nature">
        <title>Generation and annotation of the DNA sequences of human chromosomes 2 and 4.</title>
        <authorList>
            <person name="Hillier L.W."/>
            <person name="Graves T.A."/>
            <person name="Fulton R.S."/>
            <person name="Fulton L.A."/>
            <person name="Pepin K.H."/>
            <person name="Minx P."/>
            <person name="Wagner-McPherson C."/>
            <person name="Layman D."/>
            <person name="Wylie K."/>
            <person name="Sekhon M."/>
            <person name="Becker M.C."/>
            <person name="Fewell G.A."/>
            <person name="Delehaunty K.D."/>
            <person name="Miner T.L."/>
            <person name="Nash W.E."/>
            <person name="Kremitzki C."/>
            <person name="Oddy L."/>
            <person name="Du H."/>
            <person name="Sun H."/>
            <person name="Bradshaw-Cordum H."/>
            <person name="Ali J."/>
            <person name="Carter J."/>
            <person name="Cordes M."/>
            <person name="Harris A."/>
            <person name="Isak A."/>
            <person name="van Brunt A."/>
            <person name="Nguyen C."/>
            <person name="Du F."/>
            <person name="Courtney L."/>
            <person name="Kalicki J."/>
            <person name="Ozersky P."/>
            <person name="Abbott S."/>
            <person name="Armstrong J."/>
            <person name="Belter E.A."/>
            <person name="Caruso L."/>
            <person name="Cedroni M."/>
            <person name="Cotton M."/>
            <person name="Davidson T."/>
            <person name="Desai A."/>
            <person name="Elliott G."/>
            <person name="Erb T."/>
            <person name="Fronick C."/>
            <person name="Gaige T."/>
            <person name="Haakenson W."/>
            <person name="Haglund K."/>
            <person name="Holmes A."/>
            <person name="Harkins R."/>
            <person name="Kim K."/>
            <person name="Kruchowski S.S."/>
            <person name="Strong C.M."/>
            <person name="Grewal N."/>
            <person name="Goyea E."/>
            <person name="Hou S."/>
            <person name="Levy A."/>
            <person name="Martinka S."/>
            <person name="Mead K."/>
            <person name="McLellan M.D."/>
            <person name="Meyer R."/>
            <person name="Randall-Maher J."/>
            <person name="Tomlinson C."/>
            <person name="Dauphin-Kohlberg S."/>
            <person name="Kozlowicz-Reilly A."/>
            <person name="Shah N."/>
            <person name="Swearengen-Shahid S."/>
            <person name="Snider J."/>
            <person name="Strong J.T."/>
            <person name="Thompson J."/>
            <person name="Yoakum M."/>
            <person name="Leonard S."/>
            <person name="Pearman C."/>
            <person name="Trani L."/>
            <person name="Radionenko M."/>
            <person name="Waligorski J.E."/>
            <person name="Wang C."/>
            <person name="Rock S.M."/>
            <person name="Tin-Wollam A.-M."/>
            <person name="Maupin R."/>
            <person name="Latreille P."/>
            <person name="Wendl M.C."/>
            <person name="Yang S.-P."/>
            <person name="Pohl C."/>
            <person name="Wallis J.W."/>
            <person name="Spieth J."/>
            <person name="Bieri T.A."/>
            <person name="Berkowicz N."/>
            <person name="Nelson J.O."/>
            <person name="Osborne J."/>
            <person name="Ding L."/>
            <person name="Meyer R."/>
            <person name="Sabo A."/>
            <person name="Shotland Y."/>
            <person name="Sinha P."/>
            <person name="Wohldmann P.E."/>
            <person name="Cook L.L."/>
            <person name="Hickenbotham M.T."/>
            <person name="Eldred J."/>
            <person name="Williams D."/>
            <person name="Jones T.A."/>
            <person name="She X."/>
            <person name="Ciccarelli F.D."/>
            <person name="Izaurralde E."/>
            <person name="Taylor J."/>
            <person name="Schmutz J."/>
            <person name="Myers R.M."/>
            <person name="Cox D.R."/>
            <person name="Huang X."/>
            <person name="McPherson J.D."/>
            <person name="Mardis E.R."/>
            <person name="Clifton S.W."/>
            <person name="Warren W.C."/>
            <person name="Chinwalla A.T."/>
            <person name="Eddy S.R."/>
            <person name="Marra M.A."/>
            <person name="Ovcharenko I."/>
            <person name="Furey T.S."/>
            <person name="Miller W."/>
            <person name="Eichler E.E."/>
            <person name="Bork P."/>
            <person name="Suyama M."/>
            <person name="Torrents D."/>
            <person name="Waterston R.H."/>
            <person name="Wilson R.K."/>
        </authorList>
    </citation>
    <scope>NUCLEOTIDE SEQUENCE [LARGE SCALE GENOMIC DNA]</scope>
</reference>
<reference key="3">
    <citation type="journal article" date="2004" name="Genome Res.">
        <title>The status, quality, and expansion of the NIH full-length cDNA project: the Mammalian Gene Collection (MGC).</title>
        <authorList>
            <consortium name="The MGC Project Team"/>
        </authorList>
    </citation>
    <scope>NUCLEOTIDE SEQUENCE [LARGE SCALE MRNA] (ISOFORM 1)</scope>
    <scope>NUCLEOTIDE SEQUENCE [LARGE SCALE MRNA] OF 275-707 (ISOFORM 3)</scope>
    <source>
        <tissue>Adrenal cortex</tissue>
        <tissue>Muscle</tissue>
        <tissue>Testis</tissue>
    </source>
</reference>
<reference key="4">
    <citation type="journal article" date="2003" name="Gene">
        <title>Molecular cloning and characterization of a novel gene family of four ancient conserved domain proteins (ACDP).</title>
        <authorList>
            <person name="Wang C.-Y."/>
            <person name="Shi J.-D."/>
            <person name="Yang P."/>
            <person name="Kumar P.G."/>
            <person name="Li Q.-Z."/>
            <person name="Run Q.-G."/>
            <person name="Su Y.-C."/>
            <person name="Scott H.S."/>
            <person name="Kao K.-J."/>
            <person name="She J.-X."/>
        </authorList>
    </citation>
    <scope>NUCLEOTIDE SEQUENCE [MRNA] OF 294-707 (ISOFORM 1)</scope>
    <scope>TISSUE SPECIFICITY</scope>
    <source>
        <tissue>Brain</tissue>
    </source>
</reference>
<reference key="5">
    <citation type="journal article" date="2008" name="Mol. Cell">
        <title>Kinase-selective enrichment enables quantitative phosphoproteomics of the kinome across the cell cycle.</title>
        <authorList>
            <person name="Daub H."/>
            <person name="Olsen J.V."/>
            <person name="Bairlein M."/>
            <person name="Gnad F."/>
            <person name="Oppermann F.S."/>
            <person name="Korner R."/>
            <person name="Greff Z."/>
            <person name="Keri G."/>
            <person name="Stemmann O."/>
            <person name="Mann M."/>
        </authorList>
    </citation>
    <scope>IDENTIFICATION BY MASS SPECTROMETRY [LARGE SCALE ANALYSIS]</scope>
    <source>
        <tissue>Cervix carcinoma</tissue>
    </source>
</reference>
<reference key="6">
    <citation type="journal article" date="2009" name="Anal. Chem.">
        <title>Lys-N and trypsin cover complementary parts of the phosphoproteome in a refined SCX-based approach.</title>
        <authorList>
            <person name="Gauci S."/>
            <person name="Helbig A.O."/>
            <person name="Slijper M."/>
            <person name="Krijgsveld J."/>
            <person name="Heck A.J."/>
            <person name="Mohammed S."/>
        </authorList>
    </citation>
    <scope>IDENTIFICATION BY MASS SPECTROMETRY [LARGE SCALE ANALYSIS]</scope>
</reference>
<reference key="7">
    <citation type="journal article" date="2009" name="Sci. Signal.">
        <title>Quantitative phosphoproteomic analysis of T cell receptor signaling reveals system-wide modulation of protein-protein interactions.</title>
        <authorList>
            <person name="Mayya V."/>
            <person name="Lundgren D.H."/>
            <person name="Hwang S.-I."/>
            <person name="Rezaul K."/>
            <person name="Wu L."/>
            <person name="Eng J.K."/>
            <person name="Rodionov V."/>
            <person name="Han D.K."/>
        </authorList>
    </citation>
    <scope>IDENTIFICATION BY MASS SPECTROMETRY [LARGE SCALE ANALYSIS]</scope>
    <source>
        <tissue>Leukemic T-cell</tissue>
    </source>
</reference>
<reference key="8">
    <citation type="journal article" date="2010" name="Sci. Signal.">
        <title>Quantitative phosphoproteomics reveals widespread full phosphorylation site occupancy during mitosis.</title>
        <authorList>
            <person name="Olsen J.V."/>
            <person name="Vermeulen M."/>
            <person name="Santamaria A."/>
            <person name="Kumar C."/>
            <person name="Miller M.L."/>
            <person name="Jensen L.J."/>
            <person name="Gnad F."/>
            <person name="Cox J."/>
            <person name="Jensen T.S."/>
            <person name="Nigg E.A."/>
            <person name="Brunak S."/>
            <person name="Mann M."/>
        </authorList>
    </citation>
    <scope>PHOSPHORYLATION [LARGE SCALE ANALYSIS] AT SER-661</scope>
    <scope>IDENTIFICATION BY MASS SPECTROMETRY [LARGE SCALE ANALYSIS]</scope>
    <source>
        <tissue>Cervix carcinoma</tissue>
    </source>
</reference>
<reference key="9">
    <citation type="journal article" date="2013" name="J. Proteome Res.">
        <title>Toward a comprehensive characterization of a human cancer cell phosphoproteome.</title>
        <authorList>
            <person name="Zhou H."/>
            <person name="Di Palma S."/>
            <person name="Preisinger C."/>
            <person name="Peng M."/>
            <person name="Polat A.N."/>
            <person name="Heck A.J."/>
            <person name="Mohammed S."/>
        </authorList>
    </citation>
    <scope>PHOSPHORYLATION [LARGE SCALE ANALYSIS] AT SER-661 AND SER-700</scope>
    <scope>IDENTIFICATION BY MASS SPECTROMETRY [LARGE SCALE ANALYSIS]</scope>
    <source>
        <tissue>Cervix carcinoma</tissue>
        <tissue>Erythroleukemia</tissue>
    </source>
</reference>
<dbReference type="EMBL" id="AK000025">
    <property type="protein sequence ID" value="BAA90891.1"/>
    <property type="status" value="ALT_FRAME"/>
    <property type="molecule type" value="mRNA"/>
</dbReference>
<dbReference type="EMBL" id="AK126847">
    <property type="protein sequence ID" value="BAG54379.1"/>
    <property type="molecule type" value="mRNA"/>
</dbReference>
<dbReference type="EMBL" id="AC092636">
    <property type="protein sequence ID" value="AAY14964.1"/>
    <property type="molecule type" value="Genomic_DNA"/>
</dbReference>
<dbReference type="EMBL" id="BC007199">
    <property type="protein sequence ID" value="AAH07199.3"/>
    <property type="status" value="ALT_INIT"/>
    <property type="molecule type" value="mRNA"/>
</dbReference>
<dbReference type="EMBL" id="BC022944">
    <property type="protein sequence ID" value="AAH22944.1"/>
    <property type="molecule type" value="mRNA"/>
</dbReference>
<dbReference type="EMBL" id="BC037272">
    <property type="protein sequence ID" value="AAH37272.1"/>
    <property type="molecule type" value="mRNA"/>
</dbReference>
<dbReference type="EMBL" id="AF216965">
    <property type="protein sequence ID" value="AAF86377.1"/>
    <property type="status" value="ALT_INIT"/>
    <property type="molecule type" value="mRNA"/>
</dbReference>
<dbReference type="CCDS" id="CCDS2025.1">
    <molecule id="Q8NE01-1"/>
</dbReference>
<dbReference type="CCDS" id="CCDS2026.1">
    <molecule id="Q8NE01-2"/>
</dbReference>
<dbReference type="RefSeq" id="NP_060093.3">
    <molecule id="Q8NE01-1"/>
    <property type="nucleotide sequence ID" value="NM_017623.4"/>
</dbReference>
<dbReference type="RefSeq" id="NP_951060.1">
    <molecule id="Q8NE01-2"/>
    <property type="nucleotide sequence ID" value="NM_199078.3"/>
</dbReference>
<dbReference type="PDB" id="5K22">
    <property type="method" value="X-ray"/>
    <property type="resolution" value="3.00 A"/>
    <property type="chains" value="B=309-452"/>
</dbReference>
<dbReference type="PDB" id="5K23">
    <property type="method" value="X-ray"/>
    <property type="resolution" value="2.96 A"/>
    <property type="chains" value="C=309-452"/>
</dbReference>
<dbReference type="PDB" id="5K25">
    <property type="method" value="X-ray"/>
    <property type="resolution" value="3.05 A"/>
    <property type="chains" value="C=309-452"/>
</dbReference>
<dbReference type="PDB" id="5TSR">
    <property type="method" value="X-ray"/>
    <property type="resolution" value="3.19 A"/>
    <property type="chains" value="B/D=309-452"/>
</dbReference>
<dbReference type="PDB" id="6DFD">
    <property type="method" value="X-ray"/>
    <property type="resolution" value="1.90 A"/>
    <property type="chains" value="A/B=453-707"/>
</dbReference>
<dbReference type="PDB" id="6MN6">
    <property type="method" value="X-ray"/>
    <property type="resolution" value="3.36 A"/>
    <property type="chains" value="A/B=299-658"/>
</dbReference>
<dbReference type="PDB" id="6WUR">
    <property type="method" value="X-ray"/>
    <property type="resolution" value="2.88 A"/>
    <property type="chains" value="B=309-452"/>
</dbReference>
<dbReference type="PDBsum" id="5K22"/>
<dbReference type="PDBsum" id="5K23"/>
<dbReference type="PDBsum" id="5K25"/>
<dbReference type="PDBsum" id="5TSR"/>
<dbReference type="PDBsum" id="6DFD"/>
<dbReference type="PDBsum" id="6MN6"/>
<dbReference type="PDBsum" id="6WUR"/>
<dbReference type="SMR" id="Q8NE01"/>
<dbReference type="BioGRID" id="117712">
    <property type="interactions" value="233"/>
</dbReference>
<dbReference type="FunCoup" id="Q8NE01">
    <property type="interactions" value="878"/>
</dbReference>
<dbReference type="IntAct" id="Q8NE01">
    <property type="interactions" value="120"/>
</dbReference>
<dbReference type="MINT" id="Q8NE01"/>
<dbReference type="STRING" id="9606.ENSP00000305449"/>
<dbReference type="TCDB" id="1.A.112.1.3">
    <property type="family name" value="the cyclin m mg2+ exporter (cnnm) family"/>
</dbReference>
<dbReference type="GlyCosmos" id="Q8NE01">
    <property type="glycosylation" value="1 site, No reported glycans"/>
</dbReference>
<dbReference type="GlyGen" id="Q8NE01">
    <property type="glycosylation" value="3 sites, 1 N-linked glycan (1 site), 1 O-linked glycan (1 site)"/>
</dbReference>
<dbReference type="iPTMnet" id="Q8NE01"/>
<dbReference type="PhosphoSitePlus" id="Q8NE01"/>
<dbReference type="SwissPalm" id="Q8NE01"/>
<dbReference type="BioMuta" id="CNNM3"/>
<dbReference type="DMDM" id="74751242"/>
<dbReference type="jPOST" id="Q8NE01"/>
<dbReference type="MassIVE" id="Q8NE01"/>
<dbReference type="PaxDb" id="9606-ENSP00000305449"/>
<dbReference type="PeptideAtlas" id="Q8NE01"/>
<dbReference type="ProteomicsDB" id="73108">
    <molecule id="Q8NE01-1"/>
</dbReference>
<dbReference type="ProteomicsDB" id="73109">
    <molecule id="Q8NE01-2"/>
</dbReference>
<dbReference type="ProteomicsDB" id="73110">
    <molecule id="Q8NE01-3"/>
</dbReference>
<dbReference type="Pumba" id="Q8NE01"/>
<dbReference type="TopDownProteomics" id="Q8NE01-1">
    <molecule id="Q8NE01-1"/>
</dbReference>
<dbReference type="TopDownProteomics" id="Q8NE01-2">
    <molecule id="Q8NE01-2"/>
</dbReference>
<dbReference type="TopDownProteomics" id="Q8NE01-3">
    <molecule id="Q8NE01-3"/>
</dbReference>
<dbReference type="Antibodypedia" id="3096">
    <property type="antibodies" value="211 antibodies from 27 providers"/>
</dbReference>
<dbReference type="DNASU" id="26505"/>
<dbReference type="Ensembl" id="ENST00000305510.4">
    <molecule id="Q8NE01-1"/>
    <property type="protein sequence ID" value="ENSP00000305449.3"/>
    <property type="gene ID" value="ENSG00000168763.16"/>
</dbReference>
<dbReference type="Ensembl" id="ENST00000377060.7">
    <molecule id="Q8NE01-2"/>
    <property type="protein sequence ID" value="ENSP00000366260.3"/>
    <property type="gene ID" value="ENSG00000168763.16"/>
</dbReference>
<dbReference type="GeneID" id="26505"/>
<dbReference type="KEGG" id="hsa:26505"/>
<dbReference type="MANE-Select" id="ENST00000305510.4">
    <property type="protein sequence ID" value="ENSP00000305449.3"/>
    <property type="RefSeq nucleotide sequence ID" value="NM_017623.5"/>
    <property type="RefSeq protein sequence ID" value="NP_060093.3"/>
</dbReference>
<dbReference type="UCSC" id="uc002swy.4">
    <molecule id="Q8NE01-1"/>
    <property type="organism name" value="human"/>
</dbReference>
<dbReference type="AGR" id="HGNC:104"/>
<dbReference type="CTD" id="26505"/>
<dbReference type="DisGeNET" id="26505"/>
<dbReference type="GeneCards" id="CNNM3"/>
<dbReference type="HGNC" id="HGNC:104">
    <property type="gene designation" value="CNNM3"/>
</dbReference>
<dbReference type="HPA" id="ENSG00000168763">
    <property type="expression patterns" value="Low tissue specificity"/>
</dbReference>
<dbReference type="MIM" id="607804">
    <property type="type" value="gene"/>
</dbReference>
<dbReference type="neXtProt" id="NX_Q8NE01"/>
<dbReference type="OpenTargets" id="ENSG00000168763"/>
<dbReference type="PharmGKB" id="PA26670"/>
<dbReference type="VEuPathDB" id="HostDB:ENSG00000168763"/>
<dbReference type="eggNOG" id="KOG2118">
    <property type="taxonomic scope" value="Eukaryota"/>
</dbReference>
<dbReference type="GeneTree" id="ENSGT00940000161102"/>
<dbReference type="HOGENOM" id="CLU_011310_1_1_1"/>
<dbReference type="InParanoid" id="Q8NE01"/>
<dbReference type="OMA" id="KLMFMHA"/>
<dbReference type="OrthoDB" id="5353557at2759"/>
<dbReference type="PAN-GO" id="Q8NE01">
    <property type="GO annotations" value="4 GO annotations based on evolutionary models"/>
</dbReference>
<dbReference type="PhylomeDB" id="Q8NE01"/>
<dbReference type="TreeFam" id="TF101012"/>
<dbReference type="PathwayCommons" id="Q8NE01"/>
<dbReference type="SignaLink" id="Q8NE01"/>
<dbReference type="BioGRID-ORCS" id="26505">
    <property type="hits" value="20 hits in 1160 CRISPR screens"/>
</dbReference>
<dbReference type="ChiTaRS" id="CNNM3">
    <property type="organism name" value="human"/>
</dbReference>
<dbReference type="GenomeRNAi" id="26505"/>
<dbReference type="Pharos" id="Q8NE01">
    <property type="development level" value="Tbio"/>
</dbReference>
<dbReference type="PRO" id="PR:Q8NE01"/>
<dbReference type="Proteomes" id="UP000005640">
    <property type="component" value="Chromosome 2"/>
</dbReference>
<dbReference type="RNAct" id="Q8NE01">
    <property type="molecule type" value="protein"/>
</dbReference>
<dbReference type="Bgee" id="ENSG00000168763">
    <property type="expression patterns" value="Expressed in gastrocnemius and 167 other cell types or tissues"/>
</dbReference>
<dbReference type="GO" id="GO:0016020">
    <property type="term" value="C:membrane"/>
    <property type="evidence" value="ECO:0007005"/>
    <property type="project" value="UniProtKB"/>
</dbReference>
<dbReference type="GO" id="GO:0005886">
    <property type="term" value="C:plasma membrane"/>
    <property type="evidence" value="ECO:0000318"/>
    <property type="project" value="GO_Central"/>
</dbReference>
<dbReference type="GO" id="GO:0022857">
    <property type="term" value="F:transmembrane transporter activity"/>
    <property type="evidence" value="ECO:0000318"/>
    <property type="project" value="GO_Central"/>
</dbReference>
<dbReference type="GO" id="GO:0010960">
    <property type="term" value="P:magnesium ion homeostasis"/>
    <property type="evidence" value="ECO:0000318"/>
    <property type="project" value="GO_Central"/>
</dbReference>
<dbReference type="GO" id="GO:0006811">
    <property type="term" value="P:monoatomic ion transport"/>
    <property type="evidence" value="ECO:0007669"/>
    <property type="project" value="UniProtKB-KW"/>
</dbReference>
<dbReference type="CDD" id="cd04590">
    <property type="entry name" value="CBS_pair_CorC_HlyC_assoc"/>
    <property type="match status" value="1"/>
</dbReference>
<dbReference type="FunFam" id="3.10.580.10:FF:000001">
    <property type="entry name" value="Putative metal transporter CNNM3 isoform 2"/>
    <property type="match status" value="1"/>
</dbReference>
<dbReference type="Gene3D" id="3.10.580.10">
    <property type="entry name" value="CBS-domain"/>
    <property type="match status" value="1"/>
</dbReference>
<dbReference type="InterPro" id="IPR045095">
    <property type="entry name" value="ACDP"/>
</dbReference>
<dbReference type="InterPro" id="IPR000644">
    <property type="entry name" value="CBS_dom"/>
</dbReference>
<dbReference type="InterPro" id="IPR046342">
    <property type="entry name" value="CBS_dom_sf"/>
</dbReference>
<dbReference type="InterPro" id="IPR002550">
    <property type="entry name" value="CNNM"/>
</dbReference>
<dbReference type="InterPro" id="IPR044751">
    <property type="entry name" value="Ion_transp-like_CBS"/>
</dbReference>
<dbReference type="PANTHER" id="PTHR12064">
    <property type="entry name" value="METAL TRANSPORTER CNNM"/>
    <property type="match status" value="1"/>
</dbReference>
<dbReference type="PANTHER" id="PTHR12064:SF27">
    <property type="entry name" value="METAL TRANSPORTER CNNM3"/>
    <property type="match status" value="1"/>
</dbReference>
<dbReference type="Pfam" id="PF00571">
    <property type="entry name" value="CBS"/>
    <property type="match status" value="1"/>
</dbReference>
<dbReference type="SUPFAM" id="SSF54631">
    <property type="entry name" value="CBS-domain pair"/>
    <property type="match status" value="1"/>
</dbReference>
<dbReference type="PROSITE" id="PS51371">
    <property type="entry name" value="CBS"/>
    <property type="match status" value="2"/>
</dbReference>
<dbReference type="PROSITE" id="PS51846">
    <property type="entry name" value="CNNM"/>
    <property type="match status" value="1"/>
</dbReference>
<evidence type="ECO:0000250" key="1"/>
<evidence type="ECO:0000255" key="2"/>
<evidence type="ECO:0000255" key="3">
    <source>
        <dbReference type="PROSITE-ProRule" id="PRU00703"/>
    </source>
</evidence>
<evidence type="ECO:0000255" key="4">
    <source>
        <dbReference type="PROSITE-ProRule" id="PRU01193"/>
    </source>
</evidence>
<evidence type="ECO:0000256" key="5">
    <source>
        <dbReference type="SAM" id="MobiDB-lite"/>
    </source>
</evidence>
<evidence type="ECO:0000269" key="6">
    <source>
    </source>
</evidence>
<evidence type="ECO:0000303" key="7">
    <source>
    </source>
</evidence>
<evidence type="ECO:0000303" key="8">
    <source>
    </source>
</evidence>
<evidence type="ECO:0000305" key="9"/>
<evidence type="ECO:0007744" key="10">
    <source>
    </source>
</evidence>
<evidence type="ECO:0007744" key="11">
    <source>
    </source>
</evidence>
<evidence type="ECO:0007829" key="12">
    <source>
        <dbReference type="PDB" id="5K23"/>
    </source>
</evidence>
<evidence type="ECO:0007829" key="13">
    <source>
        <dbReference type="PDB" id="5TSR"/>
    </source>
</evidence>
<evidence type="ECO:0007829" key="14">
    <source>
        <dbReference type="PDB" id="6DFD"/>
    </source>
</evidence>
<evidence type="ECO:0007829" key="15">
    <source>
        <dbReference type="PDB" id="6MN6"/>
    </source>
</evidence>
<evidence type="ECO:0007829" key="16">
    <source>
        <dbReference type="PDB" id="6WUR"/>
    </source>
</evidence>
<name>CNNM3_HUMAN</name>
<feature type="chain" id="PRO_0000295763" description="Metal transporter CNNM3">
    <location>
        <begin position="1"/>
        <end position="707"/>
    </location>
</feature>
<feature type="transmembrane region" description="Helical" evidence="2">
    <location>
        <begin position="11"/>
        <end position="27"/>
    </location>
</feature>
<feature type="transmembrane region" description="Helical" evidence="2">
    <location>
        <begin position="193"/>
        <end position="213"/>
    </location>
</feature>
<feature type="transmembrane region" description="Helical" evidence="2">
    <location>
        <begin position="221"/>
        <end position="241"/>
    </location>
</feature>
<feature type="transmembrane region" description="Helical" evidence="2">
    <location>
        <begin position="261"/>
        <end position="281"/>
    </location>
</feature>
<feature type="domain" description="CNNM transmembrane" evidence="4">
    <location>
        <begin position="130"/>
        <end position="308"/>
    </location>
</feature>
<feature type="domain" description="CBS 1" evidence="3">
    <location>
        <begin position="318"/>
        <end position="379"/>
    </location>
</feature>
<feature type="domain" description="CBS 2" evidence="3">
    <location>
        <begin position="386"/>
        <end position="452"/>
    </location>
</feature>
<feature type="region of interest" description="Disordered" evidence="5">
    <location>
        <begin position="678"/>
        <end position="707"/>
    </location>
</feature>
<feature type="compositionally biased region" description="Polar residues" evidence="5">
    <location>
        <begin position="678"/>
        <end position="691"/>
    </location>
</feature>
<feature type="modified residue" description="Phosphoserine" evidence="10 11">
    <location>
        <position position="661"/>
    </location>
</feature>
<feature type="modified residue" description="Phosphoserine" evidence="11">
    <location>
        <position position="700"/>
    </location>
</feature>
<feature type="glycosylation site" description="N-linked (GlcNAc...) asparagine" evidence="2">
    <location>
        <position position="73"/>
    </location>
</feature>
<feature type="splice variant" id="VSP_027082" description="In isoform 2 and isoform 3." evidence="7 8">
    <location>
        <begin position="410"/>
        <end position="457"/>
    </location>
</feature>
<feature type="splice variant" id="VSP_027083" description="In isoform 3." evidence="8">
    <original>GVPVEGSPGRNPGV</original>
    <variation>SLPLLPRGRDSAAYSDSDLFGLSHLVSAVTAFVWP</variation>
    <location>
        <begin position="694"/>
        <end position="707"/>
    </location>
</feature>
<feature type="sequence conflict" description="In Ref. 1; BAA90891." evidence="9" ref="1">
    <original>E</original>
    <variation>Q</variation>
    <location>
        <position position="315"/>
    </location>
</feature>
<feature type="sequence conflict" description="In Ref. 1; BAA90891." evidence="9" ref="1">
    <original>E</original>
    <variation>Q</variation>
    <location>
        <position position="404"/>
    </location>
</feature>
<feature type="sequence conflict" description="In Ref. 1; BAA90891." evidence="9" ref="1">
    <original>K</original>
    <variation>M</variation>
    <location>
        <position position="407"/>
    </location>
</feature>
<feature type="sequence conflict" description="In Ref. 1; BAA90891." evidence="9" ref="1">
    <original>K</original>
    <variation>T</variation>
    <location>
        <position position="482"/>
    </location>
</feature>
<feature type="sequence conflict" description="In Ref. 1; BAA90891." evidence="9" ref="1">
    <original>Q</original>
    <variation>H</variation>
    <location>
        <position position="532"/>
    </location>
</feature>
<feature type="sequence conflict" description="In Ref. 1; BAA90891." evidence="9" ref="1">
    <original>E</original>
    <variation>A</variation>
    <location>
        <position position="533"/>
    </location>
</feature>
<feature type="sequence conflict" description="In Ref. 1; BAA90891." evidence="9" ref="1">
    <original>A</original>
    <variation>V</variation>
    <location>
        <position position="543"/>
    </location>
</feature>
<feature type="turn" evidence="15">
    <location>
        <begin position="302"/>
        <end position="308"/>
    </location>
</feature>
<feature type="turn" evidence="16">
    <location>
        <begin position="309"/>
        <end position="311"/>
    </location>
</feature>
<feature type="helix" evidence="16">
    <location>
        <begin position="314"/>
        <end position="316"/>
    </location>
</feature>
<feature type="strand" evidence="13">
    <location>
        <begin position="318"/>
        <end position="320"/>
    </location>
</feature>
<feature type="helix" evidence="16">
    <location>
        <begin position="321"/>
        <end position="323"/>
    </location>
</feature>
<feature type="helix" evidence="16">
    <location>
        <begin position="335"/>
        <end position="342"/>
    </location>
</feature>
<feature type="strand" evidence="16">
    <location>
        <begin position="347"/>
        <end position="355"/>
    </location>
</feature>
<feature type="strand" evidence="16">
    <location>
        <begin position="359"/>
        <end position="364"/>
    </location>
</feature>
<feature type="helix" evidence="16">
    <location>
        <begin position="365"/>
        <end position="368"/>
    </location>
</feature>
<feature type="strand" evidence="12">
    <location>
        <begin position="373"/>
        <end position="375"/>
    </location>
</feature>
<feature type="helix" evidence="16">
    <location>
        <begin position="379"/>
        <end position="385"/>
    </location>
</feature>
<feature type="strand" evidence="16">
    <location>
        <begin position="392"/>
        <end position="394"/>
    </location>
</feature>
<feature type="helix" evidence="16">
    <location>
        <begin position="399"/>
        <end position="407"/>
    </location>
</feature>
<feature type="strand" evidence="16">
    <location>
        <begin position="412"/>
        <end position="420"/>
    </location>
</feature>
<feature type="strand" evidence="16">
    <location>
        <begin position="423"/>
        <end position="425"/>
    </location>
</feature>
<feature type="strand" evidence="16">
    <location>
        <begin position="428"/>
        <end position="436"/>
    </location>
</feature>
<feature type="helix" evidence="16">
    <location>
        <begin position="437"/>
        <end position="445"/>
    </location>
</feature>
<feature type="turn" evidence="15">
    <location>
        <begin position="452"/>
        <end position="454"/>
    </location>
</feature>
<feature type="helix" evidence="14">
    <location>
        <begin position="494"/>
        <end position="507"/>
    </location>
</feature>
<feature type="helix" evidence="14">
    <location>
        <begin position="509"/>
        <end position="511"/>
    </location>
</feature>
<feature type="turn" evidence="14">
    <location>
        <begin position="513"/>
        <end position="515"/>
    </location>
</feature>
<feature type="helix" evidence="14">
    <location>
        <begin position="518"/>
        <end position="525"/>
    </location>
</feature>
<feature type="helix" evidence="14">
    <location>
        <begin position="528"/>
        <end position="530"/>
    </location>
</feature>
<feature type="strand" evidence="14">
    <location>
        <begin position="531"/>
        <end position="534"/>
    </location>
</feature>
<feature type="strand" evidence="15">
    <location>
        <begin position="538"/>
        <end position="540"/>
    </location>
</feature>
<feature type="helix" evidence="14">
    <location>
        <begin position="544"/>
        <end position="546"/>
    </location>
</feature>
<feature type="strand" evidence="14">
    <location>
        <begin position="547"/>
        <end position="549"/>
    </location>
</feature>
<feature type="strand" evidence="14">
    <location>
        <begin position="557"/>
        <end position="563"/>
    </location>
</feature>
<feature type="strand" evidence="14">
    <location>
        <begin position="566"/>
        <end position="570"/>
    </location>
</feature>
<feature type="turn" evidence="14">
    <location>
        <begin position="571"/>
        <end position="574"/>
    </location>
</feature>
<feature type="strand" evidence="14">
    <location>
        <begin position="575"/>
        <end position="579"/>
    </location>
</feature>
<feature type="helix" evidence="14">
    <location>
        <begin position="587"/>
        <end position="590"/>
    </location>
</feature>
<feature type="strand" evidence="14">
    <location>
        <begin position="627"/>
        <end position="634"/>
    </location>
</feature>
<feature type="strand" evidence="14">
    <location>
        <begin position="636"/>
        <end position="642"/>
    </location>
</feature>
<feature type="helix" evidence="14">
    <location>
        <begin position="643"/>
        <end position="654"/>
    </location>
</feature>
<accession>Q8NE01</accession>
<accession>B3KX67</accession>
<accession>Q8TBV4</accession>
<accession>Q96IW4</accession>
<accession>Q9NRK4</accession>
<accession>Q9NXW6</accession>